<sequence>MMNTERPAGPLRPPHPPHPPRYLALAGPTASGKTAAALAIARVHEVEIISVDSALVYRGMDIGTAKPSAAELAAVPHHLIDIRDPLQAYSAAEFVADAQALIAAITARGRLPLLVGGTMLYFKALLEGLDPMPKADPATRALIATEAAEQGWPALHAALAEVDPVSAKRLHPADSQRIARALEVYRLSGQPLSSFQTTKLIATNEGVTGARGQKCLNIPENDRCLISLEPQNRAWLHQRIAERFDAMLAAGFIDEVRALRARGDLQADLPAMRCVGYRQAWQALDGLWPMSELRDKGICATRQLAKRQLTWLRSMPERRVVACDAPDALDQVLALARDFVNAGNKLQGQP</sequence>
<protein>
    <recommendedName>
        <fullName evidence="1">tRNA dimethylallyltransferase</fullName>
        <ecNumber evidence="1">2.5.1.75</ecNumber>
    </recommendedName>
    <alternativeName>
        <fullName evidence="1">Dimethylallyl diphosphate:tRNA dimethylallyltransferase</fullName>
        <shortName evidence="1">DMAPP:tRNA dimethylallyltransferase</shortName>
        <shortName evidence="1">DMATase</shortName>
    </alternativeName>
    <alternativeName>
        <fullName evidence="1">Isopentenyl-diphosphate:tRNA isopentenyltransferase</fullName>
        <shortName evidence="1">IPP transferase</shortName>
        <shortName evidence="1">IPPT</shortName>
        <shortName evidence="1">IPTase</shortName>
    </alternativeName>
</protein>
<evidence type="ECO:0000255" key="1">
    <source>
        <dbReference type="HAMAP-Rule" id="MF_00185"/>
    </source>
</evidence>
<evidence type="ECO:0000256" key="2">
    <source>
        <dbReference type="SAM" id="MobiDB-lite"/>
    </source>
</evidence>
<feature type="chain" id="PRO_0000377287" description="tRNA dimethylallyltransferase">
    <location>
        <begin position="1"/>
        <end position="350"/>
    </location>
</feature>
<feature type="region of interest" description="Disordered" evidence="2">
    <location>
        <begin position="1"/>
        <end position="20"/>
    </location>
</feature>
<feature type="region of interest" description="Interaction with substrate tRNA" evidence="1">
    <location>
        <begin position="52"/>
        <end position="55"/>
    </location>
</feature>
<feature type="region of interest" description="Interaction with substrate tRNA" evidence="1">
    <location>
        <begin position="176"/>
        <end position="180"/>
    </location>
</feature>
<feature type="region of interest" description="Interaction with substrate tRNA" evidence="1">
    <location>
        <begin position="273"/>
        <end position="278"/>
    </location>
</feature>
<feature type="compositionally biased region" description="Pro residues" evidence="2">
    <location>
        <begin position="10"/>
        <end position="20"/>
    </location>
</feature>
<feature type="binding site" evidence="1">
    <location>
        <begin position="27"/>
        <end position="34"/>
    </location>
    <ligand>
        <name>ATP</name>
        <dbReference type="ChEBI" id="CHEBI:30616"/>
    </ligand>
</feature>
<feature type="binding site" evidence="1">
    <location>
        <begin position="29"/>
        <end position="34"/>
    </location>
    <ligand>
        <name>substrate</name>
    </ligand>
</feature>
<feature type="site" description="Interaction with substrate tRNA" evidence="1">
    <location>
        <position position="118"/>
    </location>
</feature>
<feature type="site" description="Interaction with substrate tRNA" evidence="1">
    <location>
        <position position="140"/>
    </location>
</feature>
<accession>Q21Y86</accession>
<name>MIAA_ALBFT</name>
<gene>
    <name evidence="1" type="primary">miaA</name>
    <name type="ordered locus">Rfer_1535</name>
</gene>
<dbReference type="EC" id="2.5.1.75" evidence="1"/>
<dbReference type="EMBL" id="CP000267">
    <property type="protein sequence ID" value="ABD69267.1"/>
    <property type="molecule type" value="Genomic_DNA"/>
</dbReference>
<dbReference type="RefSeq" id="WP_011463835.1">
    <property type="nucleotide sequence ID" value="NC_007908.1"/>
</dbReference>
<dbReference type="SMR" id="Q21Y86"/>
<dbReference type="STRING" id="338969.Rfer_1535"/>
<dbReference type="KEGG" id="rfr:Rfer_1535"/>
<dbReference type="eggNOG" id="COG0324">
    <property type="taxonomic scope" value="Bacteria"/>
</dbReference>
<dbReference type="HOGENOM" id="CLU_032616_0_0_4"/>
<dbReference type="OrthoDB" id="9776390at2"/>
<dbReference type="Proteomes" id="UP000008332">
    <property type="component" value="Chromosome"/>
</dbReference>
<dbReference type="GO" id="GO:0005524">
    <property type="term" value="F:ATP binding"/>
    <property type="evidence" value="ECO:0007669"/>
    <property type="project" value="UniProtKB-UniRule"/>
</dbReference>
<dbReference type="GO" id="GO:0052381">
    <property type="term" value="F:tRNA dimethylallyltransferase activity"/>
    <property type="evidence" value="ECO:0007669"/>
    <property type="project" value="UniProtKB-UniRule"/>
</dbReference>
<dbReference type="GO" id="GO:0006400">
    <property type="term" value="P:tRNA modification"/>
    <property type="evidence" value="ECO:0007669"/>
    <property type="project" value="TreeGrafter"/>
</dbReference>
<dbReference type="FunFam" id="1.10.20.140:FF:000001">
    <property type="entry name" value="tRNA dimethylallyltransferase"/>
    <property type="match status" value="1"/>
</dbReference>
<dbReference type="Gene3D" id="1.10.20.140">
    <property type="match status" value="1"/>
</dbReference>
<dbReference type="Gene3D" id="3.40.50.300">
    <property type="entry name" value="P-loop containing nucleotide triphosphate hydrolases"/>
    <property type="match status" value="1"/>
</dbReference>
<dbReference type="HAMAP" id="MF_00185">
    <property type="entry name" value="IPP_trans"/>
    <property type="match status" value="1"/>
</dbReference>
<dbReference type="InterPro" id="IPR039657">
    <property type="entry name" value="Dimethylallyltransferase"/>
</dbReference>
<dbReference type="InterPro" id="IPR018022">
    <property type="entry name" value="IPT"/>
</dbReference>
<dbReference type="InterPro" id="IPR027417">
    <property type="entry name" value="P-loop_NTPase"/>
</dbReference>
<dbReference type="NCBIfam" id="TIGR00174">
    <property type="entry name" value="miaA"/>
    <property type="match status" value="1"/>
</dbReference>
<dbReference type="PANTHER" id="PTHR11088">
    <property type="entry name" value="TRNA DIMETHYLALLYLTRANSFERASE"/>
    <property type="match status" value="1"/>
</dbReference>
<dbReference type="PANTHER" id="PTHR11088:SF60">
    <property type="entry name" value="TRNA DIMETHYLALLYLTRANSFERASE"/>
    <property type="match status" value="1"/>
</dbReference>
<dbReference type="Pfam" id="PF01715">
    <property type="entry name" value="IPPT"/>
    <property type="match status" value="1"/>
</dbReference>
<dbReference type="SUPFAM" id="SSF52540">
    <property type="entry name" value="P-loop containing nucleoside triphosphate hydrolases"/>
    <property type="match status" value="1"/>
</dbReference>
<reference key="1">
    <citation type="submission" date="2006-02" db="EMBL/GenBank/DDBJ databases">
        <title>Complete sequence of chromosome of Rhodoferax ferrireducens DSM 15236.</title>
        <authorList>
            <person name="Copeland A."/>
            <person name="Lucas S."/>
            <person name="Lapidus A."/>
            <person name="Barry K."/>
            <person name="Detter J.C."/>
            <person name="Glavina del Rio T."/>
            <person name="Hammon N."/>
            <person name="Israni S."/>
            <person name="Pitluck S."/>
            <person name="Brettin T."/>
            <person name="Bruce D."/>
            <person name="Han C."/>
            <person name="Tapia R."/>
            <person name="Gilna P."/>
            <person name="Kiss H."/>
            <person name="Schmutz J."/>
            <person name="Larimer F."/>
            <person name="Land M."/>
            <person name="Kyrpides N."/>
            <person name="Ivanova N."/>
            <person name="Richardson P."/>
        </authorList>
    </citation>
    <scope>NUCLEOTIDE SEQUENCE [LARGE SCALE GENOMIC DNA]</scope>
    <source>
        <strain>ATCC BAA-621 / DSM 15236 / T118</strain>
    </source>
</reference>
<proteinExistence type="inferred from homology"/>
<keyword id="KW-0067">ATP-binding</keyword>
<keyword id="KW-0460">Magnesium</keyword>
<keyword id="KW-0547">Nucleotide-binding</keyword>
<keyword id="KW-1185">Reference proteome</keyword>
<keyword id="KW-0808">Transferase</keyword>
<keyword id="KW-0819">tRNA processing</keyword>
<comment type="function">
    <text evidence="1">Catalyzes the transfer of a dimethylallyl group onto the adenine at position 37 in tRNAs that read codons beginning with uridine, leading to the formation of N6-(dimethylallyl)adenosine (i(6)A).</text>
</comment>
<comment type="catalytic activity">
    <reaction evidence="1">
        <text>adenosine(37) in tRNA + dimethylallyl diphosphate = N(6)-dimethylallyladenosine(37) in tRNA + diphosphate</text>
        <dbReference type="Rhea" id="RHEA:26482"/>
        <dbReference type="Rhea" id="RHEA-COMP:10162"/>
        <dbReference type="Rhea" id="RHEA-COMP:10375"/>
        <dbReference type="ChEBI" id="CHEBI:33019"/>
        <dbReference type="ChEBI" id="CHEBI:57623"/>
        <dbReference type="ChEBI" id="CHEBI:74411"/>
        <dbReference type="ChEBI" id="CHEBI:74415"/>
        <dbReference type="EC" id="2.5.1.75"/>
    </reaction>
</comment>
<comment type="cofactor">
    <cofactor evidence="1">
        <name>Mg(2+)</name>
        <dbReference type="ChEBI" id="CHEBI:18420"/>
    </cofactor>
</comment>
<comment type="subunit">
    <text evidence="1">Monomer.</text>
</comment>
<comment type="similarity">
    <text evidence="1">Belongs to the IPP transferase family.</text>
</comment>
<organism>
    <name type="scientific">Albidiferax ferrireducens (strain ATCC BAA-621 / DSM 15236 / T118)</name>
    <name type="common">Rhodoferax ferrireducens</name>
    <dbReference type="NCBI Taxonomy" id="338969"/>
    <lineage>
        <taxon>Bacteria</taxon>
        <taxon>Pseudomonadati</taxon>
        <taxon>Pseudomonadota</taxon>
        <taxon>Betaproteobacteria</taxon>
        <taxon>Burkholderiales</taxon>
        <taxon>Comamonadaceae</taxon>
        <taxon>Rhodoferax</taxon>
    </lineage>
</organism>